<name>PG053_VACCW</name>
<sequence>MAETKEFKTLYNLFIDSYLQKLAQHSIPTNVTCAIHIGEVIGQFKNCALRITNKCMSNSRLSFTLMVESFIEVISLLPEKDRRRIAEEIGIDLDDVPSAVSKLEKNCNAYAEVNNIIDIQKLDIGECSAPPGQHMLLQIVNTGSAERNCGLQTIVKSLNKIYVPPIIENRLPYYDPWFLVGVAIILVIFTVAICSIRRNLALKYRYGTFLYV</sequence>
<feature type="chain" id="PRO_0000099493" description="Entry-fusion complex associated protein OPG083">
    <location>
        <begin position="1"/>
        <end position="212"/>
    </location>
</feature>
<feature type="topological domain" description="Virion surface" evidence="1">
    <location>
        <begin position="1"/>
        <end position="175"/>
    </location>
</feature>
<feature type="transmembrane region" description="Helical" evidence="1">
    <location>
        <begin position="176"/>
        <end position="196"/>
    </location>
</feature>
<feature type="topological domain" description="Intravirion" evidence="1">
    <location>
        <begin position="197"/>
        <end position="212"/>
    </location>
</feature>
<feature type="disulfide bond" description="by OPG088" evidence="8">
    <location>
        <begin position="33"/>
        <end position="55"/>
    </location>
</feature>
<feature type="disulfide bond" description="by OPG088" evidence="8">
    <location>
        <begin position="47"/>
        <end position="127"/>
    </location>
</feature>
<feature type="disulfide bond" description="by OPG088" evidence="8">
    <location>
        <begin position="107"/>
        <end position="149"/>
    </location>
</feature>
<feature type="sequence conflict" description="In Ref. 2; AAO89327." evidence="5" ref="2">
    <original>R</original>
    <variation>A</variation>
    <location>
        <position position="84"/>
    </location>
</feature>
<feature type="sequence conflict" description="In Ref. 2; AAO89327." evidence="5" ref="2">
    <original>R</original>
    <variation>A</variation>
    <location>
        <position position="147"/>
    </location>
</feature>
<feature type="helix" evidence="9">
    <location>
        <begin position="10"/>
        <end position="24"/>
    </location>
</feature>
<feature type="strand" evidence="9">
    <location>
        <begin position="27"/>
        <end position="29"/>
    </location>
</feature>
<feature type="strand" evidence="9">
    <location>
        <begin position="36"/>
        <end position="53"/>
    </location>
</feature>
<feature type="helix" evidence="9">
    <location>
        <begin position="59"/>
        <end position="74"/>
    </location>
</feature>
<feature type="helix" evidence="9">
    <location>
        <begin position="79"/>
        <end position="89"/>
    </location>
</feature>
<feature type="strand" evidence="9">
    <location>
        <begin position="93"/>
        <end position="95"/>
    </location>
</feature>
<feature type="helix" evidence="9">
    <location>
        <begin position="102"/>
        <end position="113"/>
    </location>
</feature>
<feature type="strand" evidence="9">
    <location>
        <begin position="117"/>
        <end position="127"/>
    </location>
</feature>
<feature type="strand" evidence="9">
    <location>
        <begin position="133"/>
        <end position="141"/>
    </location>
</feature>
<feature type="helix" evidence="9">
    <location>
        <begin position="145"/>
        <end position="158"/>
    </location>
</feature>
<organism>
    <name type="scientific">Vaccinia virus (strain Western Reserve)</name>
    <name type="common">VACV</name>
    <name type="synonym">Vaccinia virus (strain WR)</name>
    <dbReference type="NCBI Taxonomy" id="10254"/>
    <lineage>
        <taxon>Viruses</taxon>
        <taxon>Varidnaviria</taxon>
        <taxon>Bamfordvirae</taxon>
        <taxon>Nucleocytoviricota</taxon>
        <taxon>Pokkesviricetes</taxon>
        <taxon>Chitovirales</taxon>
        <taxon>Poxviridae</taxon>
        <taxon>Chordopoxvirinae</taxon>
        <taxon>Orthopoxvirus</taxon>
        <taxon>Vaccinia virus</taxon>
    </lineage>
</organism>
<comment type="function">
    <text evidence="3 4">Component of the entry fusion complex (EFC), which consists of 11 proteins. During cell infection, this complex mediates entry of the virion core into the host cytoplasm by a two-step mechanism consisting of lipid mixing of the viral and cellular membranes and subsequent pore formation.</text>
</comment>
<comment type="subunit">
    <text evidence="6">Component of the entry fusion complex (EFC) composed of OPG053/F9, OPG076/O3, OPG086/G3, OPG094/G9, OPG095/L1, OPG099/L5, OPG107/H2, OPG143/A16, OPG104/J5, OPG147/A21 and OPG155/A28. Except for OPG095/L1 and OPG052/F9, each of the EFC proteins is required for assembly or stability of the complex.</text>
</comment>
<comment type="subcellular location">
    <subcellularLocation>
        <location evidence="7">Virion membrane</location>
        <topology evidence="5">Single-pass membrane protein</topology>
    </subcellularLocation>
    <text evidence="7">Component of the mature virion (MV) membrane.</text>
</comment>
<comment type="induction">
    <text evidence="3">Expressed in the late phase of the viral replicative cycle.</text>
</comment>
<comment type="PTM">
    <text evidence="2">Disulfid bonds are oxidized in the cytoplasm by OPG088 protein.</text>
</comment>
<comment type="PTM">
    <text evidence="7">Unglycosylated because produced in viral factories instead of the classic ER -Golgi route.</text>
</comment>
<comment type="similarity">
    <text evidence="5">Belongs to the orthopoxvirus OPG053 family.</text>
</comment>
<evidence type="ECO:0000255" key="1"/>
<evidence type="ECO:0000269" key="2">
    <source>
    </source>
</evidence>
<evidence type="ECO:0000269" key="3">
    <source>
    </source>
</evidence>
<evidence type="ECO:0000269" key="4">
    <source>
    </source>
</evidence>
<evidence type="ECO:0000305" key="5"/>
<evidence type="ECO:0000305" key="6">
    <source>
    </source>
</evidence>
<evidence type="ECO:0000305" key="7">
    <source>
    </source>
</evidence>
<evidence type="ECO:0007744" key="8">
    <source>
        <dbReference type="PDB" id="6CJ6"/>
    </source>
</evidence>
<evidence type="ECO:0007829" key="9">
    <source>
        <dbReference type="PDB" id="6CJ6"/>
    </source>
</evidence>
<dbReference type="EMBL" id="M34368">
    <property type="protein sequence ID" value="AAA48239.1"/>
    <property type="molecule type" value="mRNA"/>
</dbReference>
<dbReference type="EMBL" id="AY243312">
    <property type="protein sequence ID" value="AAO89327.1"/>
    <property type="molecule type" value="Genomic_DNA"/>
</dbReference>
<dbReference type="PIR" id="A36213">
    <property type="entry name" value="A36213"/>
</dbReference>
<dbReference type="PDB" id="6CJ6">
    <property type="method" value="X-ray"/>
    <property type="resolution" value="2.10 A"/>
    <property type="chains" value="A/B/C/D=1-176"/>
</dbReference>
<dbReference type="PDBsum" id="6CJ6"/>
<dbReference type="SMR" id="P24361"/>
<dbReference type="KEGG" id="vg:3707505"/>
<dbReference type="Proteomes" id="UP000000344">
    <property type="component" value="Genome"/>
</dbReference>
<dbReference type="GO" id="GO:0016020">
    <property type="term" value="C:membrane"/>
    <property type="evidence" value="ECO:0007669"/>
    <property type="project" value="UniProtKB-KW"/>
</dbReference>
<dbReference type="GO" id="GO:0019031">
    <property type="term" value="C:viral envelope"/>
    <property type="evidence" value="ECO:0007669"/>
    <property type="project" value="UniProtKB-KW"/>
</dbReference>
<dbReference type="GO" id="GO:0055036">
    <property type="term" value="C:virion membrane"/>
    <property type="evidence" value="ECO:0007669"/>
    <property type="project" value="UniProtKB-SubCell"/>
</dbReference>
<dbReference type="InterPro" id="IPR003472">
    <property type="entry name" value="Virion_mem_poxvirus_L1"/>
</dbReference>
<dbReference type="Pfam" id="PF02442">
    <property type="entry name" value="L1R_F9L"/>
    <property type="match status" value="1"/>
</dbReference>
<proteinExistence type="evidence at protein level"/>
<gene>
    <name type="primary">OPG053</name>
    <name type="ordered locus">VACWR048</name>
    <name type="ORF">F9L</name>
</gene>
<accession>P24361</accession>
<accession>Q76ZW7</accession>
<organismHost>
    <name type="scientific">Bos taurus</name>
    <name type="common">Bovine</name>
    <dbReference type="NCBI Taxonomy" id="9913"/>
</organismHost>
<protein>
    <recommendedName>
        <fullName>Entry-fusion complex associated protein OPG083</fullName>
    </recommendedName>
    <alternativeName>
        <fullName>EFC-associated protein OPG053</fullName>
    </alternativeName>
    <alternativeName>
        <fullName>Protein F9</fullName>
    </alternativeName>
</protein>
<reference key="1">
    <citation type="journal article" date="1990" name="Virology">
        <title>The vaccinia virus HindIII F fragment: nucleotide sequence of the left 6.2 kb.</title>
        <authorList>
            <person name="Roseman N.A."/>
            <person name="Slabaugh M.B."/>
        </authorList>
    </citation>
    <scope>NUCLEOTIDE SEQUENCE [MRNA]</scope>
</reference>
<reference key="2">
    <citation type="submission" date="2003-02" db="EMBL/GenBank/DDBJ databases">
        <title>Sequencing of the coding region of Vaccinia-WR to an average 9-fold redundancy and an error rate of 0.16/10kb.</title>
        <authorList>
            <person name="Esposito J.J."/>
            <person name="Frace A.M."/>
            <person name="Sammons S.A."/>
            <person name="Olsen-Rasmussen M."/>
            <person name="Osborne J."/>
            <person name="Wohlhueter R."/>
        </authorList>
    </citation>
    <scope>NUCLEOTIDE SEQUENCE [LARGE SCALE GENOMIC DNA]</scope>
</reference>
<reference key="3">
    <citation type="journal article" date="2002" name="Proc. Natl. Acad. Sci. U.S.A.">
        <title>Complete pathway for protein disulfide bond formation encoded by poxviruses.</title>
        <authorList>
            <person name="Senkevich T.G."/>
            <person name="White C.L."/>
            <person name="Koonin E.V."/>
            <person name="Moss B."/>
        </authorList>
    </citation>
    <scope>DISULFIDE BOND BY OPG088</scope>
</reference>
<reference key="4">
    <citation type="journal article" date="2015" name="J. Virol.">
        <title>Deciphering poxvirus gene expression by RNA sequencing and ribosome profiling.</title>
        <authorList>
            <person name="Yang Z."/>
            <person name="Cao S."/>
            <person name="Martens C.A."/>
            <person name="Porcella S.F."/>
            <person name="Xie Z."/>
            <person name="Ma M."/>
            <person name="Shen B."/>
            <person name="Moss B."/>
        </authorList>
    </citation>
    <scope>INDUCTION</scope>
</reference>
<reference key="5">
    <citation type="journal article" date="2006" name="J. Virol.">
        <title>Vaccinia virus F9 virion membrane protein is required for entry but not virus assembly, in contrast to the related L1 protein.</title>
        <authorList>
            <person name="Brown E."/>
            <person name="Senkevich T.G."/>
            <person name="Moss B."/>
        </authorList>
    </citation>
    <scope>FUNCTION</scope>
</reference>
<reference key="6">
    <citation type="journal article" date="2021" name="J. Virol.">
        <title>Insights into the Organization of the Poxvirus Multicomponent Entry-Fusion Complex from Proximity Analyses in Living Infected Cells.</title>
        <authorList>
            <person name="Schin A.M."/>
            <person name="Diesterbeck U.S."/>
            <person name="Moss B."/>
        </authorList>
    </citation>
    <scope>FUNCTION</scope>
    <scope>INTERACTION WITH OPG104/J5</scope>
    <scope>SUBCELLULAR LOCATION</scope>
</reference>
<reference evidence="8" key="7">
    <citation type="journal article" date="2018" name="Sci. Rep.">
        <title>The 2.1 A structure of protein F9 and its comparison to L1, two components of the conserved poxvirus entry-fusion complex.</title>
        <authorList>
            <person name="Diesterbeck U.S."/>
            <person name="Gittis A.G."/>
            <person name="Garboczi D.N."/>
            <person name="Moss B."/>
        </authorList>
    </citation>
    <scope>X-RAY CRYSTALLOGRAPHY (2.10 ANGSTROMS) OF 1-176</scope>
</reference>
<keyword id="KW-0002">3D-structure</keyword>
<keyword id="KW-1015">Disulfide bond</keyword>
<keyword id="KW-0426">Late protein</keyword>
<keyword id="KW-0472">Membrane</keyword>
<keyword id="KW-1185">Reference proteome</keyword>
<keyword id="KW-0812">Transmembrane</keyword>
<keyword id="KW-1133">Transmembrane helix</keyword>
<keyword id="KW-0261">Viral envelope protein</keyword>
<keyword id="KW-0946">Virion</keyword>